<evidence type="ECO:0000255" key="1">
    <source>
        <dbReference type="HAMAP-Rule" id="MF_01196"/>
    </source>
</evidence>
<organism>
    <name type="scientific">Photobacterium profundum (strain SS9)</name>
    <dbReference type="NCBI Taxonomy" id="298386"/>
    <lineage>
        <taxon>Bacteria</taxon>
        <taxon>Pseudomonadati</taxon>
        <taxon>Pseudomonadota</taxon>
        <taxon>Gammaproteobacteria</taxon>
        <taxon>Vibrionales</taxon>
        <taxon>Vibrionaceae</taxon>
        <taxon>Photobacterium</taxon>
    </lineage>
</organism>
<gene>
    <name evidence="1" type="primary">zapB</name>
    <name type="ordered locus">PBPRA0250</name>
</gene>
<dbReference type="EMBL" id="CR378663">
    <property type="protein sequence ID" value="CAG18689.1"/>
    <property type="molecule type" value="Genomic_DNA"/>
</dbReference>
<dbReference type="SMR" id="Q6LVI6"/>
<dbReference type="STRING" id="298386.PBPRA0250"/>
<dbReference type="KEGG" id="ppr:PBPRA0250"/>
<dbReference type="eggNOG" id="COG3074">
    <property type="taxonomic scope" value="Bacteria"/>
</dbReference>
<dbReference type="HOGENOM" id="CLU_171174_2_0_6"/>
<dbReference type="Proteomes" id="UP000000593">
    <property type="component" value="Chromosome 1"/>
</dbReference>
<dbReference type="GO" id="GO:0005737">
    <property type="term" value="C:cytoplasm"/>
    <property type="evidence" value="ECO:0007669"/>
    <property type="project" value="UniProtKB-SubCell"/>
</dbReference>
<dbReference type="GO" id="GO:0000917">
    <property type="term" value="P:division septum assembly"/>
    <property type="evidence" value="ECO:0007669"/>
    <property type="project" value="UniProtKB-KW"/>
</dbReference>
<dbReference type="GO" id="GO:0043093">
    <property type="term" value="P:FtsZ-dependent cytokinesis"/>
    <property type="evidence" value="ECO:0007669"/>
    <property type="project" value="UniProtKB-UniRule"/>
</dbReference>
<dbReference type="Gene3D" id="1.20.5.340">
    <property type="match status" value="1"/>
</dbReference>
<dbReference type="HAMAP" id="MF_01196">
    <property type="entry name" value="ZapB"/>
    <property type="match status" value="1"/>
</dbReference>
<dbReference type="InterPro" id="IPR009252">
    <property type="entry name" value="Cell_div_ZapB"/>
</dbReference>
<dbReference type="Pfam" id="PF06005">
    <property type="entry name" value="ZapB"/>
    <property type="match status" value="1"/>
</dbReference>
<proteinExistence type="inferred from homology"/>
<name>ZAPB_PHOPR</name>
<accession>Q6LVI6</accession>
<protein>
    <recommendedName>
        <fullName evidence="1">Cell division protein ZapB</fullName>
    </recommendedName>
</protein>
<keyword id="KW-0131">Cell cycle</keyword>
<keyword id="KW-0132">Cell division</keyword>
<keyword id="KW-0175">Coiled coil</keyword>
<keyword id="KW-0963">Cytoplasm</keyword>
<keyword id="KW-1185">Reference proteome</keyword>
<keyword id="KW-0717">Septation</keyword>
<feature type="chain" id="PRO_0000333911" description="Cell division protein ZapB">
    <location>
        <begin position="1"/>
        <end position="83"/>
    </location>
</feature>
<feature type="coiled-coil region" evidence="1">
    <location>
        <begin position="7"/>
        <end position="80"/>
    </location>
</feature>
<sequence length="83" mass="9671">MNNMSLEMLEKLEAKVQMAVDTISLLQMEIEELKETNESLTAEANELRSNRETLAQDNDKLQNDHQAWQERVRTLLGKMDHVE</sequence>
<comment type="function">
    <text evidence="1">Non-essential, abundant cell division factor that is required for proper Z-ring formation. It is recruited early to the divisome by direct interaction with FtsZ, stimulating Z-ring assembly and thereby promoting cell division earlier in the cell cycle. Its recruitment to the Z-ring requires functional FtsA or ZipA.</text>
</comment>
<comment type="subunit">
    <text evidence="1">Homodimer. The ends of the coiled-coil dimer bind to each other, forming polymers. Interacts with FtsZ.</text>
</comment>
<comment type="subcellular location">
    <subcellularLocation>
        <location>Cytoplasm</location>
    </subcellularLocation>
    <text evidence="1">Localizes to the septum at mid-cell, in a FtsZ-like pattern.</text>
</comment>
<comment type="similarity">
    <text evidence="1">Belongs to the ZapB family.</text>
</comment>
<reference key="1">
    <citation type="journal article" date="2005" name="Science">
        <title>Life at depth: Photobacterium profundum genome sequence and expression analysis.</title>
        <authorList>
            <person name="Vezzi A."/>
            <person name="Campanaro S."/>
            <person name="D'Angelo M."/>
            <person name="Simonato F."/>
            <person name="Vitulo N."/>
            <person name="Lauro F.M."/>
            <person name="Cestaro A."/>
            <person name="Malacrida G."/>
            <person name="Simionati B."/>
            <person name="Cannata N."/>
            <person name="Romualdi C."/>
            <person name="Bartlett D.H."/>
            <person name="Valle G."/>
        </authorList>
    </citation>
    <scope>NUCLEOTIDE SEQUENCE [LARGE SCALE GENOMIC DNA]</scope>
    <source>
        <strain>ATCC BAA-1253 / SS9</strain>
    </source>
</reference>